<reference key="1">
    <citation type="journal article" date="2010" name="Genome Biol. Evol.">
        <title>Continuing evolution of Burkholderia mallei through genome reduction and large-scale rearrangements.</title>
        <authorList>
            <person name="Losada L."/>
            <person name="Ronning C.M."/>
            <person name="DeShazer D."/>
            <person name="Woods D."/>
            <person name="Fedorova N."/>
            <person name="Kim H.S."/>
            <person name="Shabalina S.A."/>
            <person name="Pearson T.R."/>
            <person name="Brinkac L."/>
            <person name="Tan P."/>
            <person name="Nandi T."/>
            <person name="Crabtree J."/>
            <person name="Badger J."/>
            <person name="Beckstrom-Sternberg S."/>
            <person name="Saqib M."/>
            <person name="Schutzer S.E."/>
            <person name="Keim P."/>
            <person name="Nierman W.C."/>
        </authorList>
    </citation>
    <scope>NUCLEOTIDE SEQUENCE [LARGE SCALE GENOMIC DNA]</scope>
    <source>
        <strain>SAVP1</strain>
    </source>
</reference>
<protein>
    <recommendedName>
        <fullName evidence="1">Integration host factor subunit beta</fullName>
        <shortName evidence="1">IHF-beta</shortName>
    </recommendedName>
</protein>
<comment type="function">
    <text evidence="1">This protein is one of the two subunits of integration host factor, a specific DNA-binding protein that functions in genetic recombination as well as in transcriptional and translational control.</text>
</comment>
<comment type="subunit">
    <text evidence="1">Heterodimer of an alpha and a beta chain.</text>
</comment>
<comment type="similarity">
    <text evidence="1">Belongs to the bacterial histone-like protein family.</text>
</comment>
<name>IHFB_BURMS</name>
<organism>
    <name type="scientific">Burkholderia mallei (strain SAVP1)</name>
    <dbReference type="NCBI Taxonomy" id="320388"/>
    <lineage>
        <taxon>Bacteria</taxon>
        <taxon>Pseudomonadati</taxon>
        <taxon>Pseudomonadota</taxon>
        <taxon>Betaproteobacteria</taxon>
        <taxon>Burkholderiales</taxon>
        <taxon>Burkholderiaceae</taxon>
        <taxon>Burkholderia</taxon>
        <taxon>pseudomallei group</taxon>
    </lineage>
</organism>
<keyword id="KW-0233">DNA recombination</keyword>
<keyword id="KW-0238">DNA-binding</keyword>
<keyword id="KW-0804">Transcription</keyword>
<keyword id="KW-0805">Transcription regulation</keyword>
<keyword id="KW-0810">Translation regulation</keyword>
<dbReference type="EMBL" id="CP000526">
    <property type="protein sequence ID" value="ABM49863.1"/>
    <property type="molecule type" value="Genomic_DNA"/>
</dbReference>
<dbReference type="RefSeq" id="WP_004189865.1">
    <property type="nucleotide sequence ID" value="NC_008785.1"/>
</dbReference>
<dbReference type="SMR" id="A1V6M0"/>
<dbReference type="KEGG" id="bmv:BMASAVP1_A2571"/>
<dbReference type="HOGENOM" id="CLU_105066_2_0_4"/>
<dbReference type="GO" id="GO:0005694">
    <property type="term" value="C:chromosome"/>
    <property type="evidence" value="ECO:0007669"/>
    <property type="project" value="InterPro"/>
</dbReference>
<dbReference type="GO" id="GO:0005829">
    <property type="term" value="C:cytosol"/>
    <property type="evidence" value="ECO:0007669"/>
    <property type="project" value="TreeGrafter"/>
</dbReference>
<dbReference type="GO" id="GO:0003677">
    <property type="term" value="F:DNA binding"/>
    <property type="evidence" value="ECO:0007669"/>
    <property type="project" value="UniProtKB-UniRule"/>
</dbReference>
<dbReference type="GO" id="GO:0030527">
    <property type="term" value="F:structural constituent of chromatin"/>
    <property type="evidence" value="ECO:0007669"/>
    <property type="project" value="InterPro"/>
</dbReference>
<dbReference type="GO" id="GO:0006310">
    <property type="term" value="P:DNA recombination"/>
    <property type="evidence" value="ECO:0007669"/>
    <property type="project" value="UniProtKB-UniRule"/>
</dbReference>
<dbReference type="GO" id="GO:0006355">
    <property type="term" value="P:regulation of DNA-templated transcription"/>
    <property type="evidence" value="ECO:0007669"/>
    <property type="project" value="UniProtKB-UniRule"/>
</dbReference>
<dbReference type="GO" id="GO:0006417">
    <property type="term" value="P:regulation of translation"/>
    <property type="evidence" value="ECO:0007669"/>
    <property type="project" value="UniProtKB-UniRule"/>
</dbReference>
<dbReference type="CDD" id="cd13836">
    <property type="entry name" value="IHF_B"/>
    <property type="match status" value="1"/>
</dbReference>
<dbReference type="Gene3D" id="4.10.520.10">
    <property type="entry name" value="IHF-like DNA-binding proteins"/>
    <property type="match status" value="1"/>
</dbReference>
<dbReference type="HAMAP" id="MF_00381">
    <property type="entry name" value="IHF_beta"/>
    <property type="match status" value="1"/>
</dbReference>
<dbReference type="InterPro" id="IPR000119">
    <property type="entry name" value="Hist_DNA-bd"/>
</dbReference>
<dbReference type="InterPro" id="IPR010992">
    <property type="entry name" value="IHF-like_DNA-bd_dom_sf"/>
</dbReference>
<dbReference type="InterPro" id="IPR005685">
    <property type="entry name" value="IHF_beta"/>
</dbReference>
<dbReference type="NCBIfam" id="TIGR00988">
    <property type="entry name" value="hip"/>
    <property type="match status" value="1"/>
</dbReference>
<dbReference type="NCBIfam" id="NF001222">
    <property type="entry name" value="PRK00199.1"/>
    <property type="match status" value="1"/>
</dbReference>
<dbReference type="PANTHER" id="PTHR33175">
    <property type="entry name" value="DNA-BINDING PROTEIN HU"/>
    <property type="match status" value="1"/>
</dbReference>
<dbReference type="PANTHER" id="PTHR33175:SF5">
    <property type="entry name" value="INTEGRATION HOST FACTOR SUBUNIT BETA"/>
    <property type="match status" value="1"/>
</dbReference>
<dbReference type="Pfam" id="PF00216">
    <property type="entry name" value="Bac_DNA_binding"/>
    <property type="match status" value="1"/>
</dbReference>
<dbReference type="PRINTS" id="PR01727">
    <property type="entry name" value="DNABINDINGHU"/>
</dbReference>
<dbReference type="SMART" id="SM00411">
    <property type="entry name" value="BHL"/>
    <property type="match status" value="1"/>
</dbReference>
<dbReference type="SUPFAM" id="SSF47729">
    <property type="entry name" value="IHF-like DNA-binding proteins"/>
    <property type="match status" value="1"/>
</dbReference>
<sequence length="107" mass="11918">MTKSELVAQLASRFPQLVLKDADFAVKTMLDAMSDALSKGHRIEIRGFGSFGLNRRPARVGRNPKSGEKVQVPEKHVPHFKPGKELRERVDGRAGEPLKNDEPEDAQ</sequence>
<proteinExistence type="inferred from homology"/>
<gene>
    <name evidence="1" type="primary">ihfB</name>
    <name evidence="1" type="synonym">himD</name>
    <name type="ordered locus">BMASAVP1_A2571</name>
</gene>
<feature type="chain" id="PRO_1000122197" description="Integration host factor subunit beta">
    <location>
        <begin position="1"/>
        <end position="107"/>
    </location>
</feature>
<feature type="region of interest" description="Disordered" evidence="2">
    <location>
        <begin position="55"/>
        <end position="107"/>
    </location>
</feature>
<feature type="compositionally biased region" description="Basic and acidic residues" evidence="2">
    <location>
        <begin position="65"/>
        <end position="101"/>
    </location>
</feature>
<accession>A1V6M0</accession>
<evidence type="ECO:0000255" key="1">
    <source>
        <dbReference type="HAMAP-Rule" id="MF_00381"/>
    </source>
</evidence>
<evidence type="ECO:0000256" key="2">
    <source>
        <dbReference type="SAM" id="MobiDB-lite"/>
    </source>
</evidence>